<name>SYL_STAA1</name>
<dbReference type="EC" id="6.1.1.4" evidence="1"/>
<dbReference type="EMBL" id="AP009324">
    <property type="protein sequence ID" value="BAF78629.1"/>
    <property type="molecule type" value="Genomic_DNA"/>
</dbReference>
<dbReference type="SMR" id="A7X3J9"/>
<dbReference type="KEGG" id="saw:SAHV_1746"/>
<dbReference type="HOGENOM" id="CLU_004427_0_0_9"/>
<dbReference type="GO" id="GO:0005829">
    <property type="term" value="C:cytosol"/>
    <property type="evidence" value="ECO:0007669"/>
    <property type="project" value="TreeGrafter"/>
</dbReference>
<dbReference type="GO" id="GO:0002161">
    <property type="term" value="F:aminoacyl-tRNA deacylase activity"/>
    <property type="evidence" value="ECO:0007669"/>
    <property type="project" value="InterPro"/>
</dbReference>
<dbReference type="GO" id="GO:0005524">
    <property type="term" value="F:ATP binding"/>
    <property type="evidence" value="ECO:0007669"/>
    <property type="project" value="UniProtKB-UniRule"/>
</dbReference>
<dbReference type="GO" id="GO:0004823">
    <property type="term" value="F:leucine-tRNA ligase activity"/>
    <property type="evidence" value="ECO:0007669"/>
    <property type="project" value="UniProtKB-UniRule"/>
</dbReference>
<dbReference type="GO" id="GO:0006429">
    <property type="term" value="P:leucyl-tRNA aminoacylation"/>
    <property type="evidence" value="ECO:0007669"/>
    <property type="project" value="UniProtKB-UniRule"/>
</dbReference>
<dbReference type="CDD" id="cd07958">
    <property type="entry name" value="Anticodon_Ia_Leu_BEm"/>
    <property type="match status" value="1"/>
</dbReference>
<dbReference type="CDD" id="cd00812">
    <property type="entry name" value="LeuRS_core"/>
    <property type="match status" value="1"/>
</dbReference>
<dbReference type="FunFam" id="1.10.730.10:FF:000012">
    <property type="entry name" value="Leucine--tRNA ligase"/>
    <property type="match status" value="1"/>
</dbReference>
<dbReference type="FunFam" id="1.10.730.10:FF:000018">
    <property type="entry name" value="Leucine--tRNA ligase"/>
    <property type="match status" value="1"/>
</dbReference>
<dbReference type="FunFam" id="3.10.20.590:FF:000001">
    <property type="entry name" value="Leucine--tRNA ligase"/>
    <property type="match status" value="1"/>
</dbReference>
<dbReference type="FunFam" id="3.40.50.620:FF:000056">
    <property type="entry name" value="Leucine--tRNA ligase"/>
    <property type="match status" value="1"/>
</dbReference>
<dbReference type="FunFam" id="3.40.50.620:FF:000077">
    <property type="entry name" value="Leucine--tRNA ligase"/>
    <property type="match status" value="1"/>
</dbReference>
<dbReference type="Gene3D" id="3.10.20.590">
    <property type="match status" value="1"/>
</dbReference>
<dbReference type="Gene3D" id="3.40.50.620">
    <property type="entry name" value="HUPs"/>
    <property type="match status" value="2"/>
</dbReference>
<dbReference type="Gene3D" id="1.10.730.10">
    <property type="entry name" value="Isoleucyl-tRNA Synthetase, Domain 1"/>
    <property type="match status" value="1"/>
</dbReference>
<dbReference type="HAMAP" id="MF_00049_B">
    <property type="entry name" value="Leu_tRNA_synth_B"/>
    <property type="match status" value="1"/>
</dbReference>
<dbReference type="InterPro" id="IPR001412">
    <property type="entry name" value="aa-tRNA-synth_I_CS"/>
</dbReference>
<dbReference type="InterPro" id="IPR002300">
    <property type="entry name" value="aa-tRNA-synth_Ia"/>
</dbReference>
<dbReference type="InterPro" id="IPR002302">
    <property type="entry name" value="Leu-tRNA-ligase"/>
</dbReference>
<dbReference type="InterPro" id="IPR025709">
    <property type="entry name" value="Leu_tRNA-synth_edit"/>
</dbReference>
<dbReference type="InterPro" id="IPR013155">
    <property type="entry name" value="M/V/L/I-tRNA-synth_anticd-bd"/>
</dbReference>
<dbReference type="InterPro" id="IPR015413">
    <property type="entry name" value="Methionyl/Leucyl_tRNA_Synth"/>
</dbReference>
<dbReference type="InterPro" id="IPR014729">
    <property type="entry name" value="Rossmann-like_a/b/a_fold"/>
</dbReference>
<dbReference type="InterPro" id="IPR009080">
    <property type="entry name" value="tRNAsynth_Ia_anticodon-bd"/>
</dbReference>
<dbReference type="InterPro" id="IPR009008">
    <property type="entry name" value="Val/Leu/Ile-tRNA-synth_edit"/>
</dbReference>
<dbReference type="NCBIfam" id="TIGR00396">
    <property type="entry name" value="leuS_bact"/>
    <property type="match status" value="1"/>
</dbReference>
<dbReference type="PANTHER" id="PTHR43740:SF2">
    <property type="entry name" value="LEUCINE--TRNA LIGASE, MITOCHONDRIAL"/>
    <property type="match status" value="1"/>
</dbReference>
<dbReference type="PANTHER" id="PTHR43740">
    <property type="entry name" value="LEUCYL-TRNA SYNTHETASE"/>
    <property type="match status" value="1"/>
</dbReference>
<dbReference type="Pfam" id="PF08264">
    <property type="entry name" value="Anticodon_1"/>
    <property type="match status" value="1"/>
</dbReference>
<dbReference type="Pfam" id="PF00133">
    <property type="entry name" value="tRNA-synt_1"/>
    <property type="match status" value="1"/>
</dbReference>
<dbReference type="Pfam" id="PF13603">
    <property type="entry name" value="tRNA-synt_1_2"/>
    <property type="match status" value="1"/>
</dbReference>
<dbReference type="Pfam" id="PF09334">
    <property type="entry name" value="tRNA-synt_1g"/>
    <property type="match status" value="1"/>
</dbReference>
<dbReference type="PRINTS" id="PR00985">
    <property type="entry name" value="TRNASYNTHLEU"/>
</dbReference>
<dbReference type="SUPFAM" id="SSF47323">
    <property type="entry name" value="Anticodon-binding domain of a subclass of class I aminoacyl-tRNA synthetases"/>
    <property type="match status" value="1"/>
</dbReference>
<dbReference type="SUPFAM" id="SSF52374">
    <property type="entry name" value="Nucleotidylyl transferase"/>
    <property type="match status" value="1"/>
</dbReference>
<dbReference type="SUPFAM" id="SSF50677">
    <property type="entry name" value="ValRS/IleRS/LeuRS editing domain"/>
    <property type="match status" value="1"/>
</dbReference>
<dbReference type="PROSITE" id="PS00178">
    <property type="entry name" value="AA_TRNA_LIGASE_I"/>
    <property type="match status" value="1"/>
</dbReference>
<comment type="catalytic activity">
    <reaction evidence="1">
        <text>tRNA(Leu) + L-leucine + ATP = L-leucyl-tRNA(Leu) + AMP + diphosphate</text>
        <dbReference type="Rhea" id="RHEA:11688"/>
        <dbReference type="Rhea" id="RHEA-COMP:9613"/>
        <dbReference type="Rhea" id="RHEA-COMP:9622"/>
        <dbReference type="ChEBI" id="CHEBI:30616"/>
        <dbReference type="ChEBI" id="CHEBI:33019"/>
        <dbReference type="ChEBI" id="CHEBI:57427"/>
        <dbReference type="ChEBI" id="CHEBI:78442"/>
        <dbReference type="ChEBI" id="CHEBI:78494"/>
        <dbReference type="ChEBI" id="CHEBI:456215"/>
        <dbReference type="EC" id="6.1.1.4"/>
    </reaction>
</comment>
<comment type="subcellular location">
    <subcellularLocation>
        <location evidence="1">Cytoplasm</location>
    </subcellularLocation>
</comment>
<comment type="similarity">
    <text evidence="1">Belongs to the class-I aminoacyl-tRNA synthetase family.</text>
</comment>
<evidence type="ECO:0000255" key="1">
    <source>
        <dbReference type="HAMAP-Rule" id="MF_00049"/>
    </source>
</evidence>
<keyword id="KW-0030">Aminoacyl-tRNA synthetase</keyword>
<keyword id="KW-0067">ATP-binding</keyword>
<keyword id="KW-0963">Cytoplasm</keyword>
<keyword id="KW-0436">Ligase</keyword>
<keyword id="KW-0547">Nucleotide-binding</keyword>
<keyword id="KW-0648">Protein biosynthesis</keyword>
<gene>
    <name evidence="1" type="primary">leuS</name>
    <name type="ordered locus">SAHV_1746</name>
</gene>
<organism>
    <name type="scientific">Staphylococcus aureus (strain Mu3 / ATCC 700698)</name>
    <dbReference type="NCBI Taxonomy" id="418127"/>
    <lineage>
        <taxon>Bacteria</taxon>
        <taxon>Bacillati</taxon>
        <taxon>Bacillota</taxon>
        <taxon>Bacilli</taxon>
        <taxon>Bacillales</taxon>
        <taxon>Staphylococcaceae</taxon>
        <taxon>Staphylococcus</taxon>
    </lineage>
</organism>
<accession>A7X3J9</accession>
<proteinExistence type="inferred from homology"/>
<feature type="chain" id="PRO_1000009436" description="Leucine--tRNA ligase">
    <location>
        <begin position="1"/>
        <end position="804"/>
    </location>
</feature>
<feature type="short sequence motif" description="'HIGH' region">
    <location>
        <begin position="40"/>
        <end position="51"/>
    </location>
</feature>
<feature type="short sequence motif" description="'KMSKS' region">
    <location>
        <begin position="576"/>
        <end position="580"/>
    </location>
</feature>
<feature type="binding site" evidence="1">
    <location>
        <position position="579"/>
    </location>
    <ligand>
        <name>ATP</name>
        <dbReference type="ChEBI" id="CHEBI:30616"/>
    </ligand>
</feature>
<protein>
    <recommendedName>
        <fullName evidence="1">Leucine--tRNA ligase</fullName>
        <ecNumber evidence="1">6.1.1.4</ecNumber>
    </recommendedName>
    <alternativeName>
        <fullName evidence="1">Leucyl-tRNA synthetase</fullName>
        <shortName evidence="1">LeuRS</shortName>
    </alternativeName>
</protein>
<sequence>MNYNHNQIEKKWQDYWDENKTFKTNDNLGQKKFYALDMFPYPSGAGLHVGHPEGYTATDIISRYKRMQGYNVLHPMGWDAFGLPAEQYALDTGNDPREFTKKNIQTFKRQIKELGFSYDWDREVNTTDPEYYKWTQWIFIQLYNKGLAYVDEVAVNWCPALGTVLSNEEVIDGVSERGGHPVYRKPMKQWVLKITEYADQLLADLDDLDWPESLKDMQRNWIGRSEGAKVSFDVDNTEGKVEVFTTRPDTIYGASFLVLSPEHALVNSITTDEYKEKVKAYQTEASKKSDLERTDLAKDKSGVFTGAYAINPLSGEKVQIWIADYVLSTYGTGAIMAVPAHDDRDYEFAKKFDLPIIEVIEGGNVEEAAYTGEGKHINSGELDGLENEAAITKAIQLLEQKGAGEKKVNYKLRDWLFSRQRYWGEPIPVIHWEDGTMTTVPEEELPLLLPETDEIKPSGTGESPLANIDSFVNVVDEKTGMKGRRETNTMPQWAGSCWYYLRYIDPKNENMLADPEKLKHWLPVDLYIGGVEHAVLHLLYARFWHKVLYDLGIVPTKEPFQKLFNQGMILGEGNEKMSKSKGNVINPDDIVQSHGADTLRLYEMFMGPLDAAIAWSEKGLDGSRRFLDRVWRLMVNEDGTLSSKIVTTNNKSLDKVYNQTVKKVTEDFETLGFNTAISQLMVFINECYKVDEVYKPYIEGFVKMLAPIAPHIGEELWSKLGHEESITYQPWPTYDEALLVDDEVEIVVQVNGKLRAKIKIAKDTSKEEMQEIALSNDNVKASIEGKDIMKVIAVPQKLVNIVAK</sequence>
<reference key="1">
    <citation type="journal article" date="2008" name="Antimicrob. Agents Chemother.">
        <title>Mutated response regulator graR is responsible for phenotypic conversion of Staphylococcus aureus from heterogeneous vancomycin-intermediate resistance to vancomycin-intermediate resistance.</title>
        <authorList>
            <person name="Neoh H.-M."/>
            <person name="Cui L."/>
            <person name="Yuzawa H."/>
            <person name="Takeuchi F."/>
            <person name="Matsuo M."/>
            <person name="Hiramatsu K."/>
        </authorList>
    </citation>
    <scope>NUCLEOTIDE SEQUENCE [LARGE SCALE GENOMIC DNA]</scope>
    <source>
        <strain>Mu3 / ATCC 700698</strain>
    </source>
</reference>